<feature type="initiator methionine" description="Removed">
    <location>
        <position position="1"/>
    </location>
</feature>
<feature type="chain" id="PRO_0000203618" description="Guanine nucleotide-binding protein alpha-1 subunit">
    <location>
        <begin position="2"/>
        <end position="383"/>
    </location>
</feature>
<feature type="domain" description="G-alpha" evidence="1">
    <location>
        <begin position="37"/>
        <end position="383"/>
    </location>
</feature>
<feature type="region of interest" description="Disordered" evidence="2">
    <location>
        <begin position="1"/>
        <end position="20"/>
    </location>
</feature>
<feature type="region of interest" description="G1 motif" evidence="1">
    <location>
        <begin position="40"/>
        <end position="53"/>
    </location>
</feature>
<feature type="region of interest" description="G2 motif" evidence="1">
    <location>
        <begin position="185"/>
        <end position="193"/>
    </location>
</feature>
<feature type="region of interest" description="G3 motif" evidence="1">
    <location>
        <begin position="214"/>
        <end position="223"/>
    </location>
</feature>
<feature type="region of interest" description="G4 motif" evidence="1">
    <location>
        <begin position="283"/>
        <end position="290"/>
    </location>
</feature>
<feature type="region of interest" description="G5 motif" evidence="1">
    <location>
        <begin position="353"/>
        <end position="358"/>
    </location>
</feature>
<feature type="binding site" evidence="16 27">
    <location>
        <position position="48"/>
    </location>
    <ligand>
        <name>GTP</name>
        <dbReference type="ChEBI" id="CHEBI:37565"/>
    </ligand>
</feature>
<feature type="binding site" evidence="16 27">
    <location>
        <position position="49"/>
    </location>
    <ligand>
        <name>GTP</name>
        <dbReference type="ChEBI" id="CHEBI:37565"/>
    </ligand>
</feature>
<feature type="binding site" evidence="16 27">
    <location>
        <position position="50"/>
    </location>
    <ligand>
        <name>GTP</name>
        <dbReference type="ChEBI" id="CHEBI:37565"/>
    </ligand>
</feature>
<feature type="binding site" evidence="16 27">
    <location>
        <position position="51"/>
    </location>
    <ligand>
        <name>GTP</name>
        <dbReference type="ChEBI" id="CHEBI:37565"/>
    </ligand>
</feature>
<feature type="binding site" evidence="16 27">
    <location>
        <position position="52"/>
    </location>
    <ligand>
        <name>GTP</name>
        <dbReference type="ChEBI" id="CHEBI:37565"/>
    </ligand>
</feature>
<feature type="binding site" evidence="16 27">
    <location>
        <position position="52"/>
    </location>
    <ligand>
        <name>Mg(2+)</name>
        <dbReference type="ChEBI" id="CHEBI:18420"/>
    </ligand>
</feature>
<feature type="binding site" evidence="16 27">
    <location>
        <position position="53"/>
    </location>
    <ligand>
        <name>GTP</name>
        <dbReference type="ChEBI" id="CHEBI:37565"/>
    </ligand>
</feature>
<feature type="binding site" evidence="16 27">
    <location>
        <position position="162"/>
    </location>
    <ligand>
        <name>GTP</name>
        <dbReference type="ChEBI" id="CHEBI:37565"/>
    </ligand>
</feature>
<feature type="binding site" evidence="16 27">
    <location>
        <position position="187"/>
    </location>
    <ligand>
        <name>GTP</name>
        <dbReference type="ChEBI" id="CHEBI:37565"/>
    </ligand>
</feature>
<feature type="binding site" evidence="16 27">
    <location>
        <position position="188"/>
    </location>
    <ligand>
        <name>GTP</name>
        <dbReference type="ChEBI" id="CHEBI:37565"/>
    </ligand>
</feature>
<feature type="binding site" evidence="16 27">
    <location>
        <position position="193"/>
    </location>
    <ligand>
        <name>GTP</name>
        <dbReference type="ChEBI" id="CHEBI:37565"/>
    </ligand>
</feature>
<feature type="binding site" evidence="16 27">
    <location>
        <position position="193"/>
    </location>
    <ligand>
        <name>Mg(2+)</name>
        <dbReference type="ChEBI" id="CHEBI:18420"/>
    </ligand>
</feature>
<feature type="binding site" evidence="16 27">
    <location>
        <position position="221"/>
    </location>
    <ligand>
        <name>GTP</name>
        <dbReference type="ChEBI" id="CHEBI:37565"/>
    </ligand>
</feature>
<feature type="binding site" evidence="16 27">
    <location>
        <position position="287"/>
    </location>
    <ligand>
        <name>GTP</name>
        <dbReference type="ChEBI" id="CHEBI:37565"/>
    </ligand>
</feature>
<feature type="binding site" evidence="16 27">
    <location>
        <position position="288"/>
    </location>
    <ligand>
        <name>GTP</name>
        <dbReference type="ChEBI" id="CHEBI:37565"/>
    </ligand>
</feature>
<feature type="binding site" evidence="16 27">
    <location>
        <position position="290"/>
    </location>
    <ligand>
        <name>GTP</name>
        <dbReference type="ChEBI" id="CHEBI:37565"/>
    </ligand>
</feature>
<feature type="binding site" evidence="16 27">
    <location>
        <position position="355"/>
    </location>
    <ligand>
        <name>GTP</name>
        <dbReference type="ChEBI" id="CHEBI:37565"/>
    </ligand>
</feature>
<feature type="lipid moiety-binding region" description="N-myristoyl glycine" evidence="4 10">
    <location>
        <position position="2"/>
    </location>
</feature>
<feature type="lipid moiety-binding region" description="S-palmitoyl cysteine" evidence="23">
    <location>
        <position position="5"/>
    </location>
</feature>
<feature type="strand" evidence="28">
    <location>
        <begin position="37"/>
        <end position="44"/>
    </location>
</feature>
<feature type="helix" evidence="28">
    <location>
        <begin position="51"/>
        <end position="62"/>
    </location>
</feature>
<feature type="helix" evidence="28">
    <location>
        <begin position="68"/>
        <end position="72"/>
    </location>
</feature>
<feature type="helix" evidence="28">
    <location>
        <begin position="75"/>
        <end position="99"/>
    </location>
</feature>
<feature type="helix" evidence="28">
    <location>
        <begin position="110"/>
        <end position="125"/>
    </location>
</feature>
<feature type="helix" evidence="28">
    <location>
        <begin position="133"/>
        <end position="142"/>
    </location>
</feature>
<feature type="helix" evidence="28">
    <location>
        <begin position="146"/>
        <end position="152"/>
    </location>
</feature>
<feature type="helix" evidence="28">
    <location>
        <begin position="153"/>
        <end position="157"/>
    </location>
</feature>
<feature type="helix" evidence="28">
    <location>
        <begin position="164"/>
        <end position="168"/>
    </location>
</feature>
<feature type="helix" evidence="28">
    <location>
        <begin position="171"/>
        <end position="175"/>
    </location>
</feature>
<feature type="helix" evidence="28">
    <location>
        <begin position="183"/>
        <end position="188"/>
    </location>
</feature>
<feature type="strand" evidence="28">
    <location>
        <begin position="195"/>
        <end position="201"/>
    </location>
</feature>
<feature type="strand" evidence="28">
    <location>
        <begin position="212"/>
        <end position="219"/>
    </location>
</feature>
<feature type="helix" evidence="28">
    <location>
        <begin position="225"/>
        <end position="228"/>
    </location>
</feature>
<feature type="helix" evidence="28">
    <location>
        <begin position="230"/>
        <end position="232"/>
    </location>
</feature>
<feature type="strand" evidence="28">
    <location>
        <begin position="236"/>
        <end position="244"/>
    </location>
</feature>
<feature type="helix" evidence="28">
    <location>
        <begin position="245"/>
        <end position="247"/>
    </location>
</feature>
<feature type="helix" evidence="28">
    <location>
        <begin position="260"/>
        <end position="272"/>
    </location>
</feature>
<feature type="helix" evidence="28">
    <location>
        <begin position="275"/>
        <end position="277"/>
    </location>
</feature>
<feature type="strand" evidence="28">
    <location>
        <begin position="281"/>
        <end position="287"/>
    </location>
</feature>
<feature type="helix" evidence="28">
    <location>
        <begin position="289"/>
        <end position="295"/>
    </location>
</feature>
<feature type="turn" evidence="28">
    <location>
        <begin position="296"/>
        <end position="298"/>
    </location>
</feature>
<feature type="helix" evidence="28">
    <location>
        <begin position="301"/>
        <end position="303"/>
    </location>
</feature>
<feature type="helix" evidence="28">
    <location>
        <begin position="305"/>
        <end position="307"/>
    </location>
</feature>
<feature type="helix" evidence="28">
    <location>
        <begin position="316"/>
        <end position="337"/>
    </location>
</feature>
<feature type="turn" evidence="28">
    <location>
        <begin position="341"/>
        <end position="345"/>
    </location>
</feature>
<feature type="strand" evidence="28">
    <location>
        <begin position="348"/>
        <end position="352"/>
    </location>
</feature>
<feature type="helix" evidence="28">
    <location>
        <begin position="358"/>
        <end position="378"/>
    </location>
</feature>
<gene>
    <name evidence="20" type="primary">GPA1</name>
    <name evidence="25" type="ordered locus">At2g26300</name>
    <name evidence="26" type="ORF">T1D16.6</name>
</gene>
<sequence>MGLLCSRSRHHTEDTDENTQAAEIERRIEQEAKAEKHIRKLLLLGAGESGKSTIFKQIKLLFQTGFDEGELKSYVPVIHANVYQTIKLLHDGTKEFAQNETDSAKYMLSSESIAIGEKLSEIGGRLDYPRLTKDIAEGIETLWKDPAIQETCARGNELQVPDCTKYLMENLKRLSDINYIPTKEDVLYARVRTTGVVEIQFSPVGENKKSGEVYRLFDVGGQRNERRKWIHLFEGVTAVIFCAAISEYDQTLFEDEQKNRMMETKELFDWVLKQPCFEKTSFMLFLNKFDIFEKKVLDVPLNVCEWFRDYQPVSSGKQEIEHAYEFVKKKFEELYYQNTAPDRVDRVFKIYRTTALDQKLVKKTFKLVDETLRRRNLLEAGLL</sequence>
<protein>
    <recommendedName>
        <fullName evidence="20">Guanine nucleotide-binding protein alpha-1 subunit</fullName>
        <shortName evidence="20">GP-alpha-1</shortName>
    </recommendedName>
</protein>
<reference key="1">
    <citation type="journal article" date="1990" name="Proc. Natl. Acad. Sci. U.S.A.">
        <title>Molecular cloning and characterization of GPA1, a G protein alpha subunit gene from Arabidopsis thaliana.</title>
        <authorList>
            <person name="Ma H."/>
            <person name="Yanofsky M.F."/>
            <person name="Meyerowitz E.M."/>
        </authorList>
    </citation>
    <scope>NUCLEOTIDE SEQUENCE [MRNA]</scope>
</reference>
<reference key="2">
    <citation type="journal article" date="1999" name="Nature">
        <title>Sequence and analysis of chromosome 2 of the plant Arabidopsis thaliana.</title>
        <authorList>
            <person name="Lin X."/>
            <person name="Kaul S."/>
            <person name="Rounsley S.D."/>
            <person name="Shea T.P."/>
            <person name="Benito M.-I."/>
            <person name="Town C.D."/>
            <person name="Fujii C.Y."/>
            <person name="Mason T.M."/>
            <person name="Bowman C.L."/>
            <person name="Barnstead M.E."/>
            <person name="Feldblyum T.V."/>
            <person name="Buell C.R."/>
            <person name="Ketchum K.A."/>
            <person name="Lee J.J."/>
            <person name="Ronning C.M."/>
            <person name="Koo H.L."/>
            <person name="Moffat K.S."/>
            <person name="Cronin L.A."/>
            <person name="Shen M."/>
            <person name="Pai G."/>
            <person name="Van Aken S."/>
            <person name="Umayam L."/>
            <person name="Tallon L.J."/>
            <person name="Gill J.E."/>
            <person name="Adams M.D."/>
            <person name="Carrera A.J."/>
            <person name="Creasy T.H."/>
            <person name="Goodman H.M."/>
            <person name="Somerville C.R."/>
            <person name="Copenhaver G.P."/>
            <person name="Preuss D."/>
            <person name="Nierman W.C."/>
            <person name="White O."/>
            <person name="Eisen J.A."/>
            <person name="Salzberg S.L."/>
            <person name="Fraser C.M."/>
            <person name="Venter J.C."/>
        </authorList>
    </citation>
    <scope>NUCLEOTIDE SEQUENCE [LARGE SCALE GENOMIC DNA]</scope>
    <source>
        <strain>cv. Columbia</strain>
    </source>
</reference>
<reference key="3">
    <citation type="journal article" date="2017" name="Plant J.">
        <title>Araport11: a complete reannotation of the Arabidopsis thaliana reference genome.</title>
        <authorList>
            <person name="Cheng C.Y."/>
            <person name="Krishnakumar V."/>
            <person name="Chan A.P."/>
            <person name="Thibaud-Nissen F."/>
            <person name="Schobel S."/>
            <person name="Town C.D."/>
        </authorList>
    </citation>
    <scope>GENOME REANNOTATION</scope>
    <source>
        <strain>cv. Columbia</strain>
    </source>
</reference>
<reference key="4">
    <citation type="journal article" date="2003" name="Science">
        <title>Empirical analysis of transcriptional activity in the Arabidopsis genome.</title>
        <authorList>
            <person name="Yamada K."/>
            <person name="Lim J."/>
            <person name="Dale J.M."/>
            <person name="Chen H."/>
            <person name="Shinn P."/>
            <person name="Palm C.J."/>
            <person name="Southwick A.M."/>
            <person name="Wu H.C."/>
            <person name="Kim C.J."/>
            <person name="Nguyen M."/>
            <person name="Pham P.K."/>
            <person name="Cheuk R.F."/>
            <person name="Karlin-Newmann G."/>
            <person name="Liu S.X."/>
            <person name="Lam B."/>
            <person name="Sakano H."/>
            <person name="Wu T."/>
            <person name="Yu G."/>
            <person name="Miranda M."/>
            <person name="Quach H.L."/>
            <person name="Tripp M."/>
            <person name="Chang C.H."/>
            <person name="Lee J.M."/>
            <person name="Toriumi M.J."/>
            <person name="Chan M.M."/>
            <person name="Tang C.C."/>
            <person name="Onodera C.S."/>
            <person name="Deng J.M."/>
            <person name="Akiyama K."/>
            <person name="Ansari Y."/>
            <person name="Arakawa T."/>
            <person name="Banh J."/>
            <person name="Banno F."/>
            <person name="Bowser L."/>
            <person name="Brooks S.Y."/>
            <person name="Carninci P."/>
            <person name="Chao Q."/>
            <person name="Choy N."/>
            <person name="Enju A."/>
            <person name="Goldsmith A.D."/>
            <person name="Gurjal M."/>
            <person name="Hansen N.F."/>
            <person name="Hayashizaki Y."/>
            <person name="Johnson-Hopson C."/>
            <person name="Hsuan V.W."/>
            <person name="Iida K."/>
            <person name="Karnes M."/>
            <person name="Khan S."/>
            <person name="Koesema E."/>
            <person name="Ishida J."/>
            <person name="Jiang P.X."/>
            <person name="Jones T."/>
            <person name="Kawai J."/>
            <person name="Kamiya A."/>
            <person name="Meyers C."/>
            <person name="Nakajima M."/>
            <person name="Narusaka M."/>
            <person name="Seki M."/>
            <person name="Sakurai T."/>
            <person name="Satou M."/>
            <person name="Tamse R."/>
            <person name="Vaysberg M."/>
            <person name="Wallender E.K."/>
            <person name="Wong C."/>
            <person name="Yamamura Y."/>
            <person name="Yuan S."/>
            <person name="Shinozaki K."/>
            <person name="Davis R.W."/>
            <person name="Theologis A."/>
            <person name="Ecker J.R."/>
        </authorList>
    </citation>
    <scope>NUCLEOTIDE SEQUENCE [LARGE SCALE MRNA]</scope>
    <source>
        <strain>cv. Columbia</strain>
    </source>
</reference>
<reference key="5">
    <citation type="journal article" date="2003" name="J. Biol. Chem.">
        <title>Unexpected protein families including cell defense components feature in the N-myristoylome of a higher eukaryote.</title>
        <authorList>
            <person name="Boisson B."/>
            <person name="Giglione C."/>
            <person name="Meinnel T."/>
        </authorList>
    </citation>
    <scope>MYRISTOYLATION AT GLY-2</scope>
</reference>
<reference key="6">
    <citation type="journal article" date="2003" name="Plant Cell">
        <title>The Arabidopsis cupin domain protein AtPirin1 interacts with the G protein alpha-subunit GPA1 and regulates seed germination and early seedling development.</title>
        <authorList>
            <person name="Lapik Y.R."/>
            <person name="Kaufman L.S."/>
        </authorList>
    </citation>
    <scope>INTERACTION WITH PRN1</scope>
</reference>
<reference key="7">
    <citation type="journal article" date="2003" name="Science">
        <title>A seven-transmembrane RGS protein that modulates plant cell proliferation.</title>
        <authorList>
            <person name="Chen J.G."/>
            <person name="Willard F.S."/>
            <person name="Huang J."/>
            <person name="Liang J."/>
            <person name="Chasse S.A."/>
            <person name="Jones A.M."/>
            <person name="Siderovski D.P."/>
        </authorList>
    </citation>
    <scope>INTERACTION WITH RGS1</scope>
    <scope>SUBCELLULAR LOCATION</scope>
    <scope>TISSUE SPECIFICITY</scope>
</reference>
<reference key="8">
    <citation type="journal article" date="2004" name="J. Biol. Chem.">
        <title>Arabidopsis phospholipase Dalpha1 interacts with the heterotrimeric G-protein alpha-subunit through a motif analogous to the DRY motif in G-protein-coupled receptors.</title>
        <authorList>
            <person name="Zhao J."/>
            <person name="Wang X."/>
        </authorList>
    </citation>
    <scope>INTERACTION WITH PLDALPHA1</scope>
</reference>
<reference key="9">
    <citation type="journal article" date="2004" name="Plant Cell">
        <title>The Arabidopsis putative G protein-coupled receptor GCR1 interacts with the G protein alpha subunit GPA1 and regulates abscisic acid signaling.</title>
        <authorList>
            <person name="Pandey S."/>
            <person name="Assmann S.M."/>
        </authorList>
    </citation>
    <scope>FUNCTION</scope>
    <scope>INTERACTION WITH GCR1</scope>
</reference>
<reference key="10">
    <citation type="journal article" date="2006" name="J. Cell Sci.">
        <title>Plant G protein heterotrimers require dual lipidation motifs of Galpha and Ggamma and do not dissociate upon activation.</title>
        <authorList>
            <person name="Adjobo-Hermans M.J.W."/>
            <person name="Goedhart J."/>
            <person name="Gadella T.W.J. Jr."/>
        </authorList>
    </citation>
    <scope>SUBUNIT</scope>
    <scope>MYRISTOYLATION AT GLY-2</scope>
    <scope>PALMITOYLATION AT CYS-5</scope>
    <scope>SUBCELLULAR LOCATION</scope>
</reference>
<reference key="11">
    <citation type="journal article" date="2006" name="Plant Cell">
        <title>The plastid protein THYLAKOID FORMATION1 and the plasma membrane G-protein GPA1 interact in a novel sugar-signaling mechanism in Arabidopsis.</title>
        <authorList>
            <person name="Huang J."/>
            <person name="Taylor J.P."/>
            <person name="Chen J.-G."/>
            <person name="Uhrig J.F."/>
            <person name="Schnell D.J."/>
            <person name="Nakagawa T."/>
            <person name="Korth K.L."/>
            <person name="Jones A.M."/>
        </authorList>
    </citation>
    <scope>INTERACTION WITH THF1</scope>
</reference>
<reference key="12">
    <citation type="journal article" date="2006" name="Plant Physiol.">
        <title>G-protein complex mutants are hypersensitive to abscisic acid regulation of germination and postgermination development.</title>
        <authorList>
            <person name="Pandey S."/>
            <person name="Chen J.-G."/>
            <person name="Jones A.M."/>
            <person name="Assmann S.M."/>
        </authorList>
    </citation>
    <scope>RETRACTED PAPER</scope>
    <source>
        <strain>cv. Columbia</strain>
    </source>
</reference>
<reference key="13">
    <citation type="journal article" date="2019" name="Plant Physiol.">
        <authorList>
            <person name="Pandey S."/>
            <person name="Chen J.-G."/>
            <person name="Jones A.M."/>
            <person name="Assmann S.M."/>
        </authorList>
    </citation>
    <scope>RETRACTION NOTICE OF PUBMED:16581874</scope>
</reference>
<reference key="14">
    <citation type="journal article" date="2006" name="Plant Physiol.">
        <title>G-protein-coupled receptor 1, G-protein Galpha-subunit 1, and prephenate dehydratase 1 are required for blue light-induced production of phenylalanine in etiolated Arabidopsis.</title>
        <authorList>
            <person name="Warpeha K.M."/>
            <person name="Lateef S.S."/>
            <person name="Lapik Y."/>
            <person name="Anderson M."/>
            <person name="Lee B.-S."/>
            <person name="Kaufman L.S."/>
        </authorList>
    </citation>
    <scope>FUNCTION</scope>
    <scope>DISRUPTION PHENOTYPE</scope>
    <scope>INTERACTION WITH ADT3</scope>
</reference>
<reference key="15">
    <citation type="journal article" date="2007" name="Plant Physiol.">
        <title>The GCR1, GPA1, PRN1, NF-Y signal chain mediates both blue light and abscisic acid responses in Arabidopsis.</title>
        <authorList>
            <person name="Warpeha K.M."/>
            <person name="Upadhyay S."/>
            <person name="Yeh J."/>
            <person name="Adamiak J."/>
            <person name="Hawkins S.I."/>
            <person name="Lapik Y.R."/>
            <person name="Anderson M.B."/>
            <person name="Kaufman L.S."/>
        </authorList>
    </citation>
    <scope>FUNCTION</scope>
    <scope>DISRUPTION PHENOTYPE</scope>
    <source>
        <strain>cv. Columbia</strain>
        <strain>cv. Wassilewskija</strain>
    </source>
</reference>
<reference key="16">
    <citation type="journal article" date="2007" name="Proc. Natl. Acad. Sci. U.S.A.">
        <title>GTPase acceleration as the rate-limiting step in Arabidopsis G protein-coupled sugar signaling.</title>
        <authorList>
            <person name="Johnston C.A."/>
            <person name="Taylor J.P."/>
            <person name="Gao Y."/>
            <person name="Kimple A.J."/>
            <person name="Grigston J.C."/>
            <person name="Chen J.G."/>
            <person name="Siderovski D.P."/>
            <person name="Jones A.M."/>
            <person name="Willard F.S."/>
        </authorList>
    </citation>
    <scope>INTERACTION WITH RGS1</scope>
</reference>
<reference key="17">
    <citation type="journal article" date="2008" name="Plant Cell Physiol.">
        <title>Loss-of-function mutations in the Arabidopsis heterotrimeric G-protein alpha subunit enhance the developmental defects of brassinosteroid signaling and biosynthesis mutants.</title>
        <authorList>
            <person name="Gao Y."/>
            <person name="Wang S."/>
            <person name="Asami T."/>
            <person name="Chen J.-G."/>
        </authorList>
    </citation>
    <scope>DISRUPTION PHENOTYPE</scope>
</reference>
<reference key="18">
    <citation type="journal article" date="2009" name="Cell">
        <title>Two novel GPCR-type G proteins are abscisic acid receptors in Arabidopsis.</title>
        <authorList>
            <person name="Pandey S."/>
            <person name="Nelson D.C."/>
            <person name="Assmann S.M."/>
        </authorList>
    </citation>
    <scope>INTERACTION WITH GTG1 AND GTG2</scope>
</reference>
<reference key="19">
    <citation type="journal article" date="2010" name="PLoS ONE">
        <title>Glucose attenuation of auxin-mediated bimodality in lateral root formation is partly coupled by the heterotrimeric G protein complex.</title>
        <authorList>
            <person name="Booker K.S."/>
            <person name="Schwarz J."/>
            <person name="Garrett M.B."/>
            <person name="Jones A.M."/>
        </authorList>
    </citation>
    <scope>FUNCTION</scope>
    <scope>DISRUPTION PHENOTYPE</scope>
</reference>
<reference key="20">
    <citation type="journal article" date="2013" name="Methods Mol. Biol.">
        <title>Biochemical analysis of the interaction between phospholipase Dalpha1 and GTP-binding protein alpha-subunit from Arabidopsis thaliana.</title>
        <authorList>
            <person name="Zhao J."/>
            <person name="Wang X."/>
        </authorList>
    </citation>
    <scope>INTERACTION WITH PLDALPHA1</scope>
</reference>
<reference key="21">
    <citation type="journal article" date="2015" name="Nature">
        <title>Pathogen-secreted proteases activate a novel plant immune pathway.</title>
        <authorList>
            <person name="Cheng Z."/>
            <person name="Li J.F."/>
            <person name="Niu Y."/>
            <person name="Zhang X.C."/>
            <person name="Woody O.Z."/>
            <person name="Xiong Y."/>
            <person name="Djonovic S."/>
            <person name="Millet Y."/>
            <person name="Bush J."/>
            <person name="McConkey B.J."/>
            <person name="Sheen J."/>
            <person name="Ausubel F.M."/>
        </authorList>
    </citation>
    <scope>LACK OF INTERACTION WITH RACK1A; RACK1B OR RACK1C</scope>
</reference>
<reference key="22">
    <citation type="journal article" date="2018" name="J. Pineal Res.">
        <title>Phytomelatonin receptor PMTR1-mediated signaling regulates stomatal closure in Arabidopsis thaliana.</title>
        <authorList>
            <person name="Wei J."/>
            <person name="Li D.-X."/>
            <person name="Zhang J.-R."/>
            <person name="Shan C."/>
            <person name="Rengel Z."/>
            <person name="Song Z.-B."/>
            <person name="Chen Q."/>
        </authorList>
    </citation>
    <scope>FUNCTION</scope>
    <scope>DISRUPTION PHENOTYPE</scope>
    <scope>INTERACTION WITH CAND2/PMTR1</scope>
    <source>
        <strain>cv. Columbia</strain>
        <strain>cv. Wassilewskija</strain>
    </source>
</reference>
<reference key="23">
    <citation type="journal article" date="2011" name="Sci. Signal.">
        <title>The crystal structure of a self-activating G protein alpha subunit reveals its distinct mechanism of signal initiation.</title>
        <authorList>
            <person name="Jones J.C."/>
            <person name="Duffy J.W."/>
            <person name="Machius M."/>
            <person name="Temple B.R."/>
            <person name="Dohlman H.G."/>
            <person name="Jones A.M."/>
        </authorList>
    </citation>
    <scope>X-RAY CRYSTALLOGRAPHY (2.34 ANGSTROMS) OF 37-383 IN COMPLEX WITH GTP AND MAGNESIUM ION</scope>
    <scope>FUNCTION</scope>
    <scope>SELF-ACTIVATION</scope>
    <scope>COFACTOR</scope>
</reference>
<accession>P18064</accession>
<evidence type="ECO:0000255" key="1">
    <source>
        <dbReference type="PROSITE-ProRule" id="PRU01230"/>
    </source>
</evidence>
<evidence type="ECO:0000256" key="2">
    <source>
        <dbReference type="SAM" id="MobiDB-lite"/>
    </source>
</evidence>
<evidence type="ECO:0000269" key="3">
    <source>
    </source>
</evidence>
<evidence type="ECO:0000269" key="4">
    <source>
    </source>
</evidence>
<evidence type="ECO:0000269" key="5">
    <source>
    </source>
</evidence>
<evidence type="ECO:0000269" key="6">
    <source>
    </source>
</evidence>
<evidence type="ECO:0000269" key="7">
    <source>
    </source>
</evidence>
<evidence type="ECO:0000269" key="8">
    <source>
    </source>
</evidence>
<evidence type="ECO:0000269" key="9">
    <source>
    </source>
</evidence>
<evidence type="ECO:0000269" key="10">
    <source>
    </source>
</evidence>
<evidence type="ECO:0000269" key="11">
    <source>
    </source>
</evidence>
<evidence type="ECO:0000269" key="12">
    <source>
    </source>
</evidence>
<evidence type="ECO:0000269" key="13">
    <source>
    </source>
</evidence>
<evidence type="ECO:0000269" key="14">
    <source>
    </source>
</evidence>
<evidence type="ECO:0000269" key="15">
    <source>
    </source>
</evidence>
<evidence type="ECO:0000269" key="16">
    <source>
    </source>
</evidence>
<evidence type="ECO:0000269" key="17">
    <source>
    </source>
</evidence>
<evidence type="ECO:0000269" key="18">
    <source>
    </source>
</evidence>
<evidence type="ECO:0000269" key="19">
    <source>
    </source>
</evidence>
<evidence type="ECO:0000303" key="20">
    <source>
    </source>
</evidence>
<evidence type="ECO:0000305" key="21"/>
<evidence type="ECO:0000305" key="22">
    <source>
    </source>
</evidence>
<evidence type="ECO:0000305" key="23">
    <source>
    </source>
</evidence>
<evidence type="ECO:0000305" key="24">
    <source>
    </source>
</evidence>
<evidence type="ECO:0000312" key="25">
    <source>
        <dbReference type="Araport" id="AT2G26300"/>
    </source>
</evidence>
<evidence type="ECO:0000312" key="26">
    <source>
        <dbReference type="EMBL" id="AAC14520.1"/>
    </source>
</evidence>
<evidence type="ECO:0007744" key="27">
    <source>
        <dbReference type="PDB" id="2XTZ"/>
    </source>
</evidence>
<evidence type="ECO:0007829" key="28">
    <source>
        <dbReference type="PDB" id="2XTZ"/>
    </source>
</evidence>
<organism>
    <name type="scientific">Arabidopsis thaliana</name>
    <name type="common">Mouse-ear cress</name>
    <dbReference type="NCBI Taxonomy" id="3702"/>
    <lineage>
        <taxon>Eukaryota</taxon>
        <taxon>Viridiplantae</taxon>
        <taxon>Streptophyta</taxon>
        <taxon>Embryophyta</taxon>
        <taxon>Tracheophyta</taxon>
        <taxon>Spermatophyta</taxon>
        <taxon>Magnoliopsida</taxon>
        <taxon>eudicotyledons</taxon>
        <taxon>Gunneridae</taxon>
        <taxon>Pentapetalae</taxon>
        <taxon>rosids</taxon>
        <taxon>malvids</taxon>
        <taxon>Brassicales</taxon>
        <taxon>Brassicaceae</taxon>
        <taxon>Camelineae</taxon>
        <taxon>Arabidopsis</taxon>
    </lineage>
</organism>
<comment type="function">
    <text evidence="7 8 11 15 16 19">Exhibits a fast rate of basal nucleotide exchange. Guanine nucleotide-binding proteins (G proteins) are involved as modulators or transducers in various transmembrane signaling systems. Together with GCR1, may regulate the cell cycle via a signaling cascade that uses phosphatidylinositol-specific phospholipase C (PI-PLC) as an effector and inositol 1,4,5-trisphosphate (IP(3)) as a second messenger. Promotes abscisic acid (ABA) responses in guard cells. Involved in the blue light (BL) signaling. Together with GCR1 and ADT3, required for BL-mediated synthesis of phenylpyruvate and subsequently of phenylalanine (Phe), in etiolated seedlings. Modulates root architecture (e.g. lateral root formation). Negatively regulated by RGS1. In collaboration with CAND2/PMTR1, regulates the melatonin-mediated stomatal closure involving H(2)O(2) and Ca(2+) signals (PubMed:29702752).</text>
</comment>
<comment type="cofactor">
    <cofactor evidence="16">
        <name>Mg(2+)</name>
        <dbReference type="ChEBI" id="CHEBI:18420"/>
    </cofactor>
</comment>
<comment type="subunit">
    <text evidence="3 5 6 7 8 9 10 12 14 16 17 18 19">G proteins are composed of 3 units; alpha, beta and gamma. The alpha chain contains the guanine nucleotide binding site. Interacts with RGS1, THF1, the pirin protein PRN1, GTG1 and GTG2. Binds to GCR1. May interact with ADT3 (PubMed:12837948, PubMed:14500984, PubMed:15155892, PubMed:16415218, PubMed:16582010, PubMed:17158913, PubMed:17951432, PubMed:19135895, PubMed:21304159). No interactions with RACK1A, RACK1B or RACK1C (PubMed:25731164). Interacts with PLDALPHA1 (PubMed:14594812, PubMed:23913032). Interacts with CAND2/PMTR1 (PubMed:29702752).</text>
</comment>
<comment type="interaction">
    <interactant intactId="EBI-443890">
        <id>P18064</id>
    </interactant>
    <interactant intactId="EBI-1632851">
        <id>P49177</id>
        <label>GB1</label>
    </interactant>
    <organismsDiffer>false</organismsDiffer>
    <experiments>4</experiments>
</comment>
<comment type="interaction">
    <interactant intactId="EBI-443890">
        <id>P18064</id>
    </interactant>
    <interactant intactId="EBI-443899">
        <id>O04714</id>
        <label>GCR1</label>
    </interactant>
    <organismsDiffer>false</organismsDiffer>
    <experiments>6</experiments>
</comment>
<comment type="interaction">
    <interactant intactId="EBI-443890">
        <id>P18064</id>
    </interactant>
    <interactant intactId="EBI-1804974">
        <id>F4IEM5</id>
        <label>GCR2</label>
    </interactant>
    <organismsDiffer>false</organismsDiffer>
    <experiments>5</experiments>
</comment>
<comment type="interaction">
    <interactant intactId="EBI-443890">
        <id>P18064</id>
    </interactant>
    <interactant intactId="EBI-2214605">
        <id>Q9XIP7</id>
        <label>GTG1</label>
    </interactant>
    <organismsDiffer>false</organismsDiffer>
    <experiments>2</experiments>
</comment>
<comment type="interaction">
    <interactant intactId="EBI-443890">
        <id>P18064</id>
    </interactant>
    <interactant intactId="EBI-2214623">
        <id>Q0WQG8</id>
        <label>GTG2</label>
    </interactant>
    <organismsDiffer>false</organismsDiffer>
    <experiments>2</experiments>
</comment>
<comment type="interaction">
    <interactant intactId="EBI-443890">
        <id>P18064</id>
    </interactant>
    <interactant intactId="EBI-962294">
        <id>Q38882</id>
        <label>PLDALPHA1</label>
    </interactant>
    <organismsDiffer>false</organismsDiffer>
    <experiments>3</experiments>
</comment>
<comment type="interaction">
    <interactant intactId="EBI-443890">
        <id>P18064</id>
    </interactant>
    <interactant intactId="EBI-1606661">
        <id>Q9LX49</id>
        <label>PRN1</label>
    </interactant>
    <organismsDiffer>false</organismsDiffer>
    <experiments>3</experiments>
</comment>
<comment type="interaction">
    <interactant intactId="EBI-443890">
        <id>P18064</id>
    </interactant>
    <interactant intactId="EBI-1627025">
        <id>Q8H1F2</id>
        <label>RGS1</label>
    </interactant>
    <organismsDiffer>false</organismsDiffer>
    <experiments>7</experiments>
</comment>
<comment type="interaction">
    <interactant intactId="EBI-443890">
        <id>P18064</id>
    </interactant>
    <interactant intactId="EBI-972220">
        <id>Q9SKT0</id>
        <label>THF1</label>
    </interactant>
    <organismsDiffer>false</organismsDiffer>
    <experiments>4</experiments>
</comment>
<comment type="subcellular location">
    <subcellularLocation>
        <location evidence="5 10">Cell membrane</location>
    </subcellularLocation>
</comment>
<comment type="tissue specificity">
    <text evidence="5">More abundant in roots and/or leaves.</text>
</comment>
<comment type="domain">
    <text>The helical domain (68-188) is required for self-activation.</text>
</comment>
<comment type="disruption phenotype">
    <text evidence="8 11 13 15 19">Hypersensitivity to ABA and glucose (Glc) during and after seed germination. Altered response to blue light (BL). Abnormal roots architecture; more auxin-induced lateral roots. Reduced H(2)O(2) concentration in melatonin-treated guard cells associated with impaired abscisic acid- (ABA) and melatonin-induced stomatal aperture (PubMed:29702752).</text>
</comment>
<comment type="similarity">
    <text evidence="21">Belongs to the G-alpha family.</text>
</comment>
<comment type="caution">
    <text evidence="22 24">An article reported a role as negative regulator of ABA during seed germination; however, this paper was later retracted.</text>
</comment>
<dbReference type="EMBL" id="M32887">
    <property type="protein sequence ID" value="AAA32805.1"/>
    <property type="molecule type" value="mRNA"/>
</dbReference>
<dbReference type="EMBL" id="AC004484">
    <property type="protein sequence ID" value="AAC14520.1"/>
    <property type="molecule type" value="Genomic_DNA"/>
</dbReference>
<dbReference type="EMBL" id="CP002685">
    <property type="protein sequence ID" value="AEC07820.1"/>
    <property type="molecule type" value="Genomic_DNA"/>
</dbReference>
<dbReference type="EMBL" id="CP002685">
    <property type="protein sequence ID" value="ANM62935.1"/>
    <property type="molecule type" value="Genomic_DNA"/>
</dbReference>
<dbReference type="EMBL" id="AY093966">
    <property type="protein sequence ID" value="AAM16227.1"/>
    <property type="molecule type" value="mRNA"/>
</dbReference>
<dbReference type="EMBL" id="AF385704">
    <property type="protein sequence ID" value="AAK60296.1"/>
    <property type="molecule type" value="mRNA"/>
</dbReference>
<dbReference type="PIR" id="A35864">
    <property type="entry name" value="RGMUOA"/>
</dbReference>
<dbReference type="PDB" id="2XTZ">
    <property type="method" value="X-ray"/>
    <property type="resolution" value="2.34 A"/>
    <property type="chains" value="A/B/C=37-383"/>
</dbReference>
<dbReference type="PDBsum" id="2XTZ"/>
<dbReference type="SMR" id="P18064"/>
<dbReference type="BioGRID" id="2522">
    <property type="interactions" value="56"/>
</dbReference>
<dbReference type="DIP" id="DIP-31793N"/>
<dbReference type="FunCoup" id="P18064">
    <property type="interactions" value="2405"/>
</dbReference>
<dbReference type="IntAct" id="P18064">
    <property type="interactions" value="19"/>
</dbReference>
<dbReference type="MINT" id="P18064"/>
<dbReference type="STRING" id="3702.P18064"/>
<dbReference type="TCDB" id="8.A.92.1.2">
    <property type="family name" value="the g-protein AlphaBetaGama complex (gpc) family"/>
</dbReference>
<dbReference type="iPTMnet" id="P18064"/>
<dbReference type="SwissPalm" id="P18064"/>
<dbReference type="PaxDb" id="3702-AT2G26300.1"/>
<dbReference type="ProteomicsDB" id="248501"/>
<dbReference type="EnsemblPlants" id="AT2G26300.1">
    <property type="protein sequence ID" value="AT2G26300.1"/>
    <property type="gene ID" value="AT2G26300"/>
</dbReference>
<dbReference type="EnsemblPlants" id="AT2G26300.2">
    <property type="protein sequence ID" value="AT2G26300.2"/>
    <property type="gene ID" value="AT2G26300"/>
</dbReference>
<dbReference type="GeneID" id="817170"/>
<dbReference type="Gramene" id="AT2G26300.1">
    <property type="protein sequence ID" value="AT2G26300.1"/>
    <property type="gene ID" value="AT2G26300"/>
</dbReference>
<dbReference type="Gramene" id="AT2G26300.2">
    <property type="protein sequence ID" value="AT2G26300.2"/>
    <property type="gene ID" value="AT2G26300"/>
</dbReference>
<dbReference type="KEGG" id="ath:AT2G26300"/>
<dbReference type="Araport" id="AT2G26300"/>
<dbReference type="TAIR" id="AT2G26300">
    <property type="gene designation" value="GP ALPHA 1"/>
</dbReference>
<dbReference type="eggNOG" id="KOG0082">
    <property type="taxonomic scope" value="Eukaryota"/>
</dbReference>
<dbReference type="HOGENOM" id="CLU_014184_4_0_1"/>
<dbReference type="InParanoid" id="P18064"/>
<dbReference type="OMA" id="QVIWADA"/>
<dbReference type="PhylomeDB" id="P18064"/>
<dbReference type="BioCyc" id="ARA:AT2G26300-MONOMER"/>
<dbReference type="EvolutionaryTrace" id="P18064"/>
<dbReference type="PRO" id="PR:P18064"/>
<dbReference type="Proteomes" id="UP000006548">
    <property type="component" value="Chromosome 2"/>
</dbReference>
<dbReference type="ExpressionAtlas" id="P18064">
    <property type="expression patterns" value="baseline and differential"/>
</dbReference>
<dbReference type="GO" id="GO:0005789">
    <property type="term" value="C:endoplasmic reticulum membrane"/>
    <property type="evidence" value="ECO:0000314"/>
    <property type="project" value="TAIR"/>
</dbReference>
<dbReference type="GO" id="GO:0005834">
    <property type="term" value="C:heterotrimeric G-protein complex"/>
    <property type="evidence" value="ECO:0000314"/>
    <property type="project" value="UniProtKB"/>
</dbReference>
<dbReference type="GO" id="GO:0005777">
    <property type="term" value="C:peroxisome"/>
    <property type="evidence" value="ECO:0007005"/>
    <property type="project" value="TAIR"/>
</dbReference>
<dbReference type="GO" id="GO:0005886">
    <property type="term" value="C:plasma membrane"/>
    <property type="evidence" value="ECO:0000314"/>
    <property type="project" value="UniProtKB"/>
</dbReference>
<dbReference type="GO" id="GO:0009506">
    <property type="term" value="C:plasmodesma"/>
    <property type="evidence" value="ECO:0007005"/>
    <property type="project" value="TAIR"/>
</dbReference>
<dbReference type="GO" id="GO:0016247">
    <property type="term" value="F:channel regulator activity"/>
    <property type="evidence" value="ECO:0000315"/>
    <property type="project" value="TAIR"/>
</dbReference>
<dbReference type="GO" id="GO:0001664">
    <property type="term" value="F:G protein-coupled receptor binding"/>
    <property type="evidence" value="ECO:0007669"/>
    <property type="project" value="InterPro"/>
</dbReference>
<dbReference type="GO" id="GO:0031683">
    <property type="term" value="F:G-protein beta/gamma-subunit complex binding"/>
    <property type="evidence" value="ECO:0007669"/>
    <property type="project" value="InterPro"/>
</dbReference>
<dbReference type="GO" id="GO:0005525">
    <property type="term" value="F:GTP binding"/>
    <property type="evidence" value="ECO:0000314"/>
    <property type="project" value="UniProtKB"/>
</dbReference>
<dbReference type="GO" id="GO:0003924">
    <property type="term" value="F:GTPase activity"/>
    <property type="evidence" value="ECO:0000314"/>
    <property type="project" value="TAIR"/>
</dbReference>
<dbReference type="GO" id="GO:0051020">
    <property type="term" value="F:GTPase binding"/>
    <property type="evidence" value="ECO:0000353"/>
    <property type="project" value="TAIR"/>
</dbReference>
<dbReference type="GO" id="GO:0005095">
    <property type="term" value="F:GTPase inhibitor activity"/>
    <property type="evidence" value="ECO:0000314"/>
    <property type="project" value="TAIR"/>
</dbReference>
<dbReference type="GO" id="GO:0046872">
    <property type="term" value="F:metal ion binding"/>
    <property type="evidence" value="ECO:0007669"/>
    <property type="project" value="UniProtKB-KW"/>
</dbReference>
<dbReference type="GO" id="GO:0009738">
    <property type="term" value="P:abscisic acid-activated signaling pathway"/>
    <property type="evidence" value="ECO:0000315"/>
    <property type="project" value="UniProtKB"/>
</dbReference>
<dbReference type="GO" id="GO:0007188">
    <property type="term" value="P:adenylate cyclase-modulating G protein-coupled receptor signaling pathway"/>
    <property type="evidence" value="ECO:0007669"/>
    <property type="project" value="InterPro"/>
</dbReference>
<dbReference type="GO" id="GO:0009785">
    <property type="term" value="P:blue light signaling pathway"/>
    <property type="evidence" value="ECO:0000315"/>
    <property type="project" value="UniProtKB"/>
</dbReference>
<dbReference type="GO" id="GO:0008219">
    <property type="term" value="P:cell death"/>
    <property type="evidence" value="ECO:0000315"/>
    <property type="project" value="TAIR"/>
</dbReference>
<dbReference type="GO" id="GO:0007186">
    <property type="term" value="P:G protein-coupled receptor signaling pathway"/>
    <property type="evidence" value="ECO:0000315"/>
    <property type="project" value="UniProtKB"/>
</dbReference>
<dbReference type="GO" id="GO:0009740">
    <property type="term" value="P:gibberellic acid mediated signaling pathway"/>
    <property type="evidence" value="ECO:0000315"/>
    <property type="project" value="TAIR"/>
</dbReference>
<dbReference type="GO" id="GO:0009094">
    <property type="term" value="P:L-phenylalanine biosynthetic process"/>
    <property type="evidence" value="ECO:0000315"/>
    <property type="project" value="TAIR"/>
</dbReference>
<dbReference type="GO" id="GO:0009789">
    <property type="term" value="P:positive regulation of abscisic acid-activated signaling pathway"/>
    <property type="evidence" value="ECO:0000315"/>
    <property type="project" value="TAIR"/>
</dbReference>
<dbReference type="GO" id="GO:0072593">
    <property type="term" value="P:reactive oxygen species metabolic process"/>
    <property type="evidence" value="ECO:0000315"/>
    <property type="project" value="TAIR"/>
</dbReference>
<dbReference type="GO" id="GO:0042127">
    <property type="term" value="P:regulation of cell population proliferation"/>
    <property type="evidence" value="ECO:0000315"/>
    <property type="project" value="TAIR"/>
</dbReference>
<dbReference type="GO" id="GO:0090333">
    <property type="term" value="P:regulation of stomatal closure"/>
    <property type="evidence" value="ECO:0000315"/>
    <property type="project" value="UniProtKB"/>
</dbReference>
<dbReference type="GO" id="GO:0010119">
    <property type="term" value="P:regulation of stomatal movement"/>
    <property type="evidence" value="ECO:0000315"/>
    <property type="project" value="TAIR"/>
</dbReference>
<dbReference type="GO" id="GO:0009749">
    <property type="term" value="P:response to glucose"/>
    <property type="evidence" value="ECO:0000316"/>
    <property type="project" value="TAIR"/>
</dbReference>
<dbReference type="GO" id="GO:0010244">
    <property type="term" value="P:response to low fluence blue light stimulus by blue low-fluence system"/>
    <property type="evidence" value="ECO:0000315"/>
    <property type="project" value="TAIR"/>
</dbReference>
<dbReference type="GO" id="GO:0019236">
    <property type="term" value="P:response to pheromone"/>
    <property type="evidence" value="ECO:0000315"/>
    <property type="project" value="UniProtKB"/>
</dbReference>
<dbReference type="GO" id="GO:0009845">
    <property type="term" value="P:seed germination"/>
    <property type="evidence" value="ECO:0000315"/>
    <property type="project" value="TAIR"/>
</dbReference>
<dbReference type="GO" id="GO:0003376">
    <property type="term" value="P:sphingosine-1-phosphate receptor signaling pathway"/>
    <property type="evidence" value="ECO:0000315"/>
    <property type="project" value="TAIR"/>
</dbReference>
<dbReference type="GO" id="GO:0010027">
    <property type="term" value="P:thylakoid membrane organization"/>
    <property type="evidence" value="ECO:0000315"/>
    <property type="project" value="TAIR"/>
</dbReference>
<dbReference type="GO" id="GO:0006571">
    <property type="term" value="P:tyrosine biosynthetic process"/>
    <property type="evidence" value="ECO:0000315"/>
    <property type="project" value="TAIR"/>
</dbReference>
<dbReference type="CDD" id="cd00066">
    <property type="entry name" value="G-alpha"/>
    <property type="match status" value="1"/>
</dbReference>
<dbReference type="FunFam" id="1.10.400.10:FF:000008">
    <property type="entry name" value="Guanine nucleotide-binding protein alpha-1 subunit"/>
    <property type="match status" value="1"/>
</dbReference>
<dbReference type="FunFam" id="3.40.50.300:FF:000733">
    <property type="entry name" value="Guanine nucleotide-binding protein alpha-1 subunit"/>
    <property type="match status" value="1"/>
</dbReference>
<dbReference type="Gene3D" id="1.10.400.10">
    <property type="entry name" value="GI Alpha 1, domain 2-like"/>
    <property type="match status" value="1"/>
</dbReference>
<dbReference type="Gene3D" id="3.40.50.300">
    <property type="entry name" value="P-loop containing nucleotide triphosphate hydrolases"/>
    <property type="match status" value="1"/>
</dbReference>
<dbReference type="InterPro" id="IPR001019">
    <property type="entry name" value="Gprotein_alpha_su"/>
</dbReference>
<dbReference type="InterPro" id="IPR011025">
    <property type="entry name" value="GproteinA_insert"/>
</dbReference>
<dbReference type="InterPro" id="IPR027417">
    <property type="entry name" value="P-loop_NTPase"/>
</dbReference>
<dbReference type="InterPro" id="IPR002976">
    <property type="entry name" value="Plant_Gprotein_alpha"/>
</dbReference>
<dbReference type="PANTHER" id="PTHR10218">
    <property type="entry name" value="GTP-BINDING PROTEIN ALPHA SUBUNIT"/>
    <property type="match status" value="1"/>
</dbReference>
<dbReference type="PANTHER" id="PTHR10218:SF302">
    <property type="entry name" value="GUANINE NUCLEOTIDE-BINDING PROTEIN ALPHA-5 SUBUNIT"/>
    <property type="match status" value="1"/>
</dbReference>
<dbReference type="Pfam" id="PF00503">
    <property type="entry name" value="G-alpha"/>
    <property type="match status" value="1"/>
</dbReference>
<dbReference type="PRINTS" id="PR00318">
    <property type="entry name" value="GPROTEINA"/>
</dbReference>
<dbReference type="PRINTS" id="PR01242">
    <property type="entry name" value="GPROTEINAPLT"/>
</dbReference>
<dbReference type="SMART" id="SM00275">
    <property type="entry name" value="G_alpha"/>
    <property type="match status" value="1"/>
</dbReference>
<dbReference type="SUPFAM" id="SSF52540">
    <property type="entry name" value="P-loop containing nucleoside triphosphate hydrolases"/>
    <property type="match status" value="1"/>
</dbReference>
<dbReference type="SUPFAM" id="SSF47895">
    <property type="entry name" value="Transducin (alpha subunit), insertion domain"/>
    <property type="match status" value="1"/>
</dbReference>
<dbReference type="PROSITE" id="PS51882">
    <property type="entry name" value="G_ALPHA"/>
    <property type="match status" value="1"/>
</dbReference>
<keyword id="KW-0002">3D-structure</keyword>
<keyword id="KW-0938">Abscisic acid signaling pathway</keyword>
<keyword id="KW-1003">Cell membrane</keyword>
<keyword id="KW-0342">GTP-binding</keyword>
<keyword id="KW-0378">Hydrolase</keyword>
<keyword id="KW-0449">Lipoprotein</keyword>
<keyword id="KW-0460">Magnesium</keyword>
<keyword id="KW-0472">Membrane</keyword>
<keyword id="KW-0479">Metal-binding</keyword>
<keyword id="KW-0519">Myristate</keyword>
<keyword id="KW-0547">Nucleotide-binding</keyword>
<keyword id="KW-0564">Palmitate</keyword>
<keyword id="KW-1185">Reference proteome</keyword>
<keyword id="KW-0807">Transducer</keyword>
<name>GPA1_ARATH</name>
<proteinExistence type="evidence at protein level"/>